<sequence length="513" mass="55748">MGVYSRAVAFSVFVSFLLFFTAYSKRNDGTFRVGLKKLKLDPNNRLATRFGSKQEEALRSSLRSYNNNLGGDSGDADIVPLKNYLDAQYYGEIAIGTPPQKFTVIFDTGSSNLWVPSGKCFFSLSCYFHAKYKSSRSSTYKKSGKRAAIHYGSGSISGFFSYDAVTVGDLVVKDQEFIETTSEPGLTFLVAKFDGLLGLGFQEIAVGNATPVWYNMLKQGLIKRPVFSFWLNRDPKSEEGGEIVFGGVDPKHFRGEHTFVPVTQRGYWQFDMGEVLIAGESTGYCGSGCSAIADSGTSLLAGPTAVVAMINKAIGASGVVSQQCKTVVDQYGQTILDLLLAETQPKKICSQIGLCAYDGTHGVSMGIESVVDKENTRSSSGLRDAGCPACEMAVVWIQSQLRQNMTQERIVNYINEICERMPSPNGESAVDCSQLSKMPTVSFTIGGKVFDLAPEEYVLKIGEGPVAQCISGFTALDIPPPRGPLWILGDVFMGKYHTVFDFGNEQVGFAEAV</sequence>
<name>APA2_ARATH</name>
<protein>
    <recommendedName>
        <fullName>Aspartic proteinase A2</fullName>
        <ecNumber>3.4.23.-</ecNumber>
    </recommendedName>
    <alternativeName>
        <fullName>Aspartic protease 57</fullName>
        <shortName>AtASP57</shortName>
    </alternativeName>
</protein>
<dbReference type="EC" id="3.4.23.-"/>
<dbReference type="EMBL" id="AC000375">
    <property type="protein sequence ID" value="AAB60773.1"/>
    <property type="status" value="ALT_SEQ"/>
    <property type="molecule type" value="Genomic_DNA"/>
</dbReference>
<dbReference type="EMBL" id="CP002684">
    <property type="protein sequence ID" value="AEE33946.1"/>
    <property type="molecule type" value="Genomic_DNA"/>
</dbReference>
<dbReference type="EMBL" id="CP002684">
    <property type="protein sequence ID" value="AEE33947.1"/>
    <property type="molecule type" value="Genomic_DNA"/>
</dbReference>
<dbReference type="EMBL" id="AY070453">
    <property type="protein sequence ID" value="AAL49856.1"/>
    <property type="molecule type" value="mRNA"/>
</dbReference>
<dbReference type="EMBL" id="AY142687">
    <property type="protein sequence ID" value="AAN13225.1"/>
    <property type="molecule type" value="mRNA"/>
</dbReference>
<dbReference type="EMBL" id="AK317285">
    <property type="protein sequence ID" value="BAH19961.1"/>
    <property type="molecule type" value="mRNA"/>
</dbReference>
<dbReference type="PIR" id="E96649">
    <property type="entry name" value="E96649"/>
</dbReference>
<dbReference type="RefSeq" id="NP_001031219.1">
    <property type="nucleotide sequence ID" value="NM_001036142.3"/>
</dbReference>
<dbReference type="RefSeq" id="NP_176419.2">
    <property type="nucleotide sequence ID" value="NM_104909.5"/>
</dbReference>
<dbReference type="SMR" id="Q8VYL3"/>
<dbReference type="FunCoup" id="Q8VYL3">
    <property type="interactions" value="1338"/>
</dbReference>
<dbReference type="STRING" id="3702.Q8VYL3"/>
<dbReference type="MEROPS" id="A01.A02"/>
<dbReference type="GlyCosmos" id="Q8VYL3">
    <property type="glycosylation" value="1 site, No reported glycans"/>
</dbReference>
<dbReference type="GlyGen" id="Q8VYL3">
    <property type="glycosylation" value="3 sites"/>
</dbReference>
<dbReference type="iPTMnet" id="Q8VYL3"/>
<dbReference type="PaxDb" id="3702-AT1G62290.1"/>
<dbReference type="ProteomicsDB" id="240325"/>
<dbReference type="EnsemblPlants" id="AT1G62290.1">
    <property type="protein sequence ID" value="AT1G62290.1"/>
    <property type="gene ID" value="AT1G62290"/>
</dbReference>
<dbReference type="EnsemblPlants" id="AT1G62290.2">
    <property type="protein sequence ID" value="AT1G62290.2"/>
    <property type="gene ID" value="AT1G62290"/>
</dbReference>
<dbReference type="GeneID" id="842526"/>
<dbReference type="Gramene" id="AT1G62290.1">
    <property type="protein sequence ID" value="AT1G62290.1"/>
    <property type="gene ID" value="AT1G62290"/>
</dbReference>
<dbReference type="Gramene" id="AT1G62290.2">
    <property type="protein sequence ID" value="AT1G62290.2"/>
    <property type="gene ID" value="AT1G62290"/>
</dbReference>
<dbReference type="KEGG" id="ath:AT1G62290"/>
<dbReference type="Araport" id="AT1G62290"/>
<dbReference type="TAIR" id="AT1G62290">
    <property type="gene designation" value="PASPA2"/>
</dbReference>
<dbReference type="eggNOG" id="KOG1339">
    <property type="taxonomic scope" value="Eukaryota"/>
</dbReference>
<dbReference type="HOGENOM" id="CLU_013253_3_1_1"/>
<dbReference type="InParanoid" id="Q8VYL3"/>
<dbReference type="OMA" id="YGVECAN"/>
<dbReference type="OrthoDB" id="771136at2759"/>
<dbReference type="PhylomeDB" id="Q8VYL3"/>
<dbReference type="PRO" id="PR:Q8VYL3"/>
<dbReference type="Proteomes" id="UP000006548">
    <property type="component" value="Chromosome 1"/>
</dbReference>
<dbReference type="ExpressionAtlas" id="Q8VYL3">
    <property type="expression patterns" value="baseline and differential"/>
</dbReference>
<dbReference type="GO" id="GO:0005634">
    <property type="term" value="C:nucleus"/>
    <property type="evidence" value="ECO:0007005"/>
    <property type="project" value="TAIR"/>
</dbReference>
<dbReference type="GO" id="GO:0000325">
    <property type="term" value="C:plant-type vacuole"/>
    <property type="evidence" value="ECO:0007005"/>
    <property type="project" value="TAIR"/>
</dbReference>
<dbReference type="GO" id="GO:0099503">
    <property type="term" value="C:secretory vesicle"/>
    <property type="evidence" value="ECO:0007005"/>
    <property type="project" value="TAIR"/>
</dbReference>
<dbReference type="GO" id="GO:0005773">
    <property type="term" value="C:vacuole"/>
    <property type="evidence" value="ECO:0007005"/>
    <property type="project" value="TAIR"/>
</dbReference>
<dbReference type="GO" id="GO:0004190">
    <property type="term" value="F:aspartic-type endopeptidase activity"/>
    <property type="evidence" value="ECO:0007669"/>
    <property type="project" value="UniProtKB-KW"/>
</dbReference>
<dbReference type="GO" id="GO:0006629">
    <property type="term" value="P:lipid metabolic process"/>
    <property type="evidence" value="ECO:0007669"/>
    <property type="project" value="InterPro"/>
</dbReference>
<dbReference type="GO" id="GO:0006508">
    <property type="term" value="P:proteolysis"/>
    <property type="evidence" value="ECO:0007669"/>
    <property type="project" value="UniProtKB-KW"/>
</dbReference>
<dbReference type="CDD" id="cd06098">
    <property type="entry name" value="phytepsin"/>
    <property type="match status" value="1"/>
</dbReference>
<dbReference type="FunFam" id="1.10.225.10:FF:000001">
    <property type="entry name" value="Aspartic proteinase A1"/>
    <property type="match status" value="1"/>
</dbReference>
<dbReference type="FunFam" id="2.40.70.10:FF:000115">
    <property type="entry name" value="Lysosomal aspartic protease"/>
    <property type="match status" value="1"/>
</dbReference>
<dbReference type="FunFam" id="2.40.70.10:FF:000002">
    <property type="entry name" value="Vacuolar aspartic proteinase"/>
    <property type="match status" value="1"/>
</dbReference>
<dbReference type="Gene3D" id="2.40.70.10">
    <property type="entry name" value="Acid Proteases"/>
    <property type="match status" value="2"/>
</dbReference>
<dbReference type="Gene3D" id="1.10.225.10">
    <property type="entry name" value="Saposin-like"/>
    <property type="match status" value="1"/>
</dbReference>
<dbReference type="InterPro" id="IPR001461">
    <property type="entry name" value="Aspartic_peptidase_A1"/>
</dbReference>
<dbReference type="InterPro" id="IPR001969">
    <property type="entry name" value="Aspartic_peptidase_AS"/>
</dbReference>
<dbReference type="InterPro" id="IPR033121">
    <property type="entry name" value="PEPTIDASE_A1"/>
</dbReference>
<dbReference type="InterPro" id="IPR021109">
    <property type="entry name" value="Peptidase_aspartic_dom_sf"/>
</dbReference>
<dbReference type="InterPro" id="IPR033869">
    <property type="entry name" value="Phytepsin"/>
</dbReference>
<dbReference type="InterPro" id="IPR007856">
    <property type="entry name" value="SapB_1"/>
</dbReference>
<dbReference type="InterPro" id="IPR008138">
    <property type="entry name" value="SapB_2"/>
</dbReference>
<dbReference type="InterPro" id="IPR011001">
    <property type="entry name" value="Saposin-like"/>
</dbReference>
<dbReference type="InterPro" id="IPR008139">
    <property type="entry name" value="SaposinB_dom"/>
</dbReference>
<dbReference type="PANTHER" id="PTHR47966:SF35">
    <property type="entry name" value="ASPARTIC PROTEINASE A2"/>
    <property type="match status" value="1"/>
</dbReference>
<dbReference type="PANTHER" id="PTHR47966">
    <property type="entry name" value="BETA-SITE APP-CLEAVING ENZYME, ISOFORM A-RELATED"/>
    <property type="match status" value="1"/>
</dbReference>
<dbReference type="Pfam" id="PF00026">
    <property type="entry name" value="Asp"/>
    <property type="match status" value="1"/>
</dbReference>
<dbReference type="Pfam" id="PF05184">
    <property type="entry name" value="SapB_1"/>
    <property type="match status" value="1"/>
</dbReference>
<dbReference type="Pfam" id="PF03489">
    <property type="entry name" value="SapB_2"/>
    <property type="match status" value="1"/>
</dbReference>
<dbReference type="PRINTS" id="PR00792">
    <property type="entry name" value="PEPSIN"/>
</dbReference>
<dbReference type="SMART" id="SM00741">
    <property type="entry name" value="SapB"/>
    <property type="match status" value="2"/>
</dbReference>
<dbReference type="SUPFAM" id="SSF50630">
    <property type="entry name" value="Acid proteases"/>
    <property type="match status" value="1"/>
</dbReference>
<dbReference type="SUPFAM" id="SSF47862">
    <property type="entry name" value="Saposin"/>
    <property type="match status" value="1"/>
</dbReference>
<dbReference type="PROSITE" id="PS00141">
    <property type="entry name" value="ASP_PROTEASE"/>
    <property type="match status" value="2"/>
</dbReference>
<dbReference type="PROSITE" id="PS51767">
    <property type="entry name" value="PEPTIDASE_A1"/>
    <property type="match status" value="1"/>
</dbReference>
<dbReference type="PROSITE" id="PS50015">
    <property type="entry name" value="SAP_B"/>
    <property type="match status" value="2"/>
</dbReference>
<comment type="function">
    <text evidence="1">Involved in the breakdown of propeptides of storage proteins in protein-storage vacuoles.</text>
</comment>
<comment type="subcellular location">
    <subcellularLocation>
        <location evidence="1">Vacuole</location>
    </subcellularLocation>
</comment>
<comment type="tissue specificity">
    <text evidence="6">Expressed in seed pods and dry seeds.</text>
</comment>
<comment type="similarity">
    <text evidence="7">Belongs to the peptidase A1 family.</text>
</comment>
<comment type="sequence caution" evidence="7">
    <conflict type="erroneous gene model prediction">
        <sequence resource="EMBL-CDS" id="AAB60773"/>
    </conflict>
</comment>
<evidence type="ECO:0000250" key="1"/>
<evidence type="ECO:0000255" key="2"/>
<evidence type="ECO:0000255" key="3">
    <source>
        <dbReference type="PROSITE-ProRule" id="PRU00415"/>
    </source>
</evidence>
<evidence type="ECO:0000255" key="4">
    <source>
        <dbReference type="PROSITE-ProRule" id="PRU01103"/>
    </source>
</evidence>
<evidence type="ECO:0000255" key="5">
    <source>
        <dbReference type="PROSITE-ProRule" id="PRU10094"/>
    </source>
</evidence>
<evidence type="ECO:0000269" key="6">
    <source>
    </source>
</evidence>
<evidence type="ECO:0000305" key="7"/>
<gene>
    <name type="primary">APA2</name>
    <name type="ordered locus">At1g62290</name>
    <name type="ORF">F19K23.21</name>
</gene>
<keyword id="KW-0064">Aspartyl protease</keyword>
<keyword id="KW-1015">Disulfide bond</keyword>
<keyword id="KW-0325">Glycoprotein</keyword>
<keyword id="KW-0378">Hydrolase</keyword>
<keyword id="KW-0645">Protease</keyword>
<keyword id="KW-1185">Reference proteome</keyword>
<keyword id="KW-0677">Repeat</keyword>
<keyword id="KW-0732">Signal</keyword>
<keyword id="KW-0926">Vacuole</keyword>
<keyword id="KW-0865">Zymogen</keyword>
<feature type="signal peptide" evidence="2">
    <location>
        <begin position="1"/>
        <end position="24"/>
    </location>
</feature>
<feature type="propeptide" id="PRO_0000420627" description="Activation peptide" evidence="2">
    <location>
        <begin position="25"/>
        <end position="71"/>
    </location>
</feature>
<feature type="chain" id="PRO_0000420628" description="Aspartic proteinase A2">
    <location>
        <begin position="72"/>
        <end position="513"/>
    </location>
</feature>
<feature type="domain" description="Peptidase A1" evidence="4">
    <location>
        <begin position="89"/>
        <end position="510"/>
    </location>
</feature>
<feature type="domain" description="Saposin B-type" evidence="3">
    <location>
        <begin position="319"/>
        <end position="424"/>
    </location>
</feature>
<feature type="active site" evidence="5">
    <location>
        <position position="107"/>
    </location>
</feature>
<feature type="active site" evidence="5">
    <location>
        <position position="294"/>
    </location>
</feature>
<feature type="glycosylation site" description="N-linked (GlcNAc...) asparagine" evidence="3">
    <location>
        <position position="404"/>
    </location>
</feature>
<feature type="disulfide bond" evidence="3">
    <location>
        <begin position="120"/>
        <end position="126"/>
    </location>
</feature>
<feature type="disulfide bond" evidence="3">
    <location>
        <begin position="285"/>
        <end position="289"/>
    </location>
</feature>
<feature type="disulfide bond" evidence="3">
    <location>
        <begin position="324"/>
        <end position="418"/>
    </location>
</feature>
<feature type="disulfide bond" evidence="3">
    <location>
        <begin position="349"/>
        <end position="390"/>
    </location>
</feature>
<feature type="disulfide bond" evidence="3">
    <location>
        <begin position="355"/>
        <end position="387"/>
    </location>
</feature>
<feature type="disulfide bond" evidence="3">
    <location>
        <begin position="432"/>
        <end position="469"/>
    </location>
</feature>
<organism>
    <name type="scientific">Arabidopsis thaliana</name>
    <name type="common">Mouse-ear cress</name>
    <dbReference type="NCBI Taxonomy" id="3702"/>
    <lineage>
        <taxon>Eukaryota</taxon>
        <taxon>Viridiplantae</taxon>
        <taxon>Streptophyta</taxon>
        <taxon>Embryophyta</taxon>
        <taxon>Tracheophyta</taxon>
        <taxon>Spermatophyta</taxon>
        <taxon>Magnoliopsida</taxon>
        <taxon>eudicotyledons</taxon>
        <taxon>Gunneridae</taxon>
        <taxon>Pentapetalae</taxon>
        <taxon>rosids</taxon>
        <taxon>malvids</taxon>
        <taxon>Brassicales</taxon>
        <taxon>Brassicaceae</taxon>
        <taxon>Camelineae</taxon>
        <taxon>Arabidopsis</taxon>
    </lineage>
</organism>
<reference key="1">
    <citation type="journal article" date="2000" name="Nature">
        <title>Sequence and analysis of chromosome 1 of the plant Arabidopsis thaliana.</title>
        <authorList>
            <person name="Theologis A."/>
            <person name="Ecker J.R."/>
            <person name="Palm C.J."/>
            <person name="Federspiel N.A."/>
            <person name="Kaul S."/>
            <person name="White O."/>
            <person name="Alonso J."/>
            <person name="Altafi H."/>
            <person name="Araujo R."/>
            <person name="Bowman C.L."/>
            <person name="Brooks S.Y."/>
            <person name="Buehler E."/>
            <person name="Chan A."/>
            <person name="Chao Q."/>
            <person name="Chen H."/>
            <person name="Cheuk R.F."/>
            <person name="Chin C.W."/>
            <person name="Chung M.K."/>
            <person name="Conn L."/>
            <person name="Conway A.B."/>
            <person name="Conway A.R."/>
            <person name="Creasy T.H."/>
            <person name="Dewar K."/>
            <person name="Dunn P."/>
            <person name="Etgu P."/>
            <person name="Feldblyum T.V."/>
            <person name="Feng J.-D."/>
            <person name="Fong B."/>
            <person name="Fujii C.Y."/>
            <person name="Gill J.E."/>
            <person name="Goldsmith A.D."/>
            <person name="Haas B."/>
            <person name="Hansen N.F."/>
            <person name="Hughes B."/>
            <person name="Huizar L."/>
            <person name="Hunter J.L."/>
            <person name="Jenkins J."/>
            <person name="Johnson-Hopson C."/>
            <person name="Khan S."/>
            <person name="Khaykin E."/>
            <person name="Kim C.J."/>
            <person name="Koo H.L."/>
            <person name="Kremenetskaia I."/>
            <person name="Kurtz D.B."/>
            <person name="Kwan A."/>
            <person name="Lam B."/>
            <person name="Langin-Hooper S."/>
            <person name="Lee A."/>
            <person name="Lee J.M."/>
            <person name="Lenz C.A."/>
            <person name="Li J.H."/>
            <person name="Li Y.-P."/>
            <person name="Lin X."/>
            <person name="Liu S.X."/>
            <person name="Liu Z.A."/>
            <person name="Luros J.S."/>
            <person name="Maiti R."/>
            <person name="Marziali A."/>
            <person name="Militscher J."/>
            <person name="Miranda M."/>
            <person name="Nguyen M."/>
            <person name="Nierman W.C."/>
            <person name="Osborne B.I."/>
            <person name="Pai G."/>
            <person name="Peterson J."/>
            <person name="Pham P.K."/>
            <person name="Rizzo M."/>
            <person name="Rooney T."/>
            <person name="Rowley D."/>
            <person name="Sakano H."/>
            <person name="Salzberg S.L."/>
            <person name="Schwartz J.R."/>
            <person name="Shinn P."/>
            <person name="Southwick A.M."/>
            <person name="Sun H."/>
            <person name="Tallon L.J."/>
            <person name="Tambunga G."/>
            <person name="Toriumi M.J."/>
            <person name="Town C.D."/>
            <person name="Utterback T."/>
            <person name="Van Aken S."/>
            <person name="Vaysberg M."/>
            <person name="Vysotskaia V.S."/>
            <person name="Walker M."/>
            <person name="Wu D."/>
            <person name="Yu G."/>
            <person name="Fraser C.M."/>
            <person name="Venter J.C."/>
            <person name="Davis R.W."/>
        </authorList>
    </citation>
    <scope>NUCLEOTIDE SEQUENCE [LARGE SCALE GENOMIC DNA]</scope>
    <source>
        <strain>cv. Columbia</strain>
    </source>
</reference>
<reference key="2">
    <citation type="journal article" date="2017" name="Plant J.">
        <title>Araport11: a complete reannotation of the Arabidopsis thaliana reference genome.</title>
        <authorList>
            <person name="Cheng C.Y."/>
            <person name="Krishnakumar V."/>
            <person name="Chan A.P."/>
            <person name="Thibaud-Nissen F."/>
            <person name="Schobel S."/>
            <person name="Town C.D."/>
        </authorList>
    </citation>
    <scope>GENOME REANNOTATION</scope>
    <source>
        <strain>cv. Columbia</strain>
    </source>
</reference>
<reference key="3">
    <citation type="journal article" date="2003" name="Science">
        <title>Empirical analysis of transcriptional activity in the Arabidopsis genome.</title>
        <authorList>
            <person name="Yamada K."/>
            <person name="Lim J."/>
            <person name="Dale J.M."/>
            <person name="Chen H."/>
            <person name="Shinn P."/>
            <person name="Palm C.J."/>
            <person name="Southwick A.M."/>
            <person name="Wu H.C."/>
            <person name="Kim C.J."/>
            <person name="Nguyen M."/>
            <person name="Pham P.K."/>
            <person name="Cheuk R.F."/>
            <person name="Karlin-Newmann G."/>
            <person name="Liu S.X."/>
            <person name="Lam B."/>
            <person name="Sakano H."/>
            <person name="Wu T."/>
            <person name="Yu G."/>
            <person name="Miranda M."/>
            <person name="Quach H.L."/>
            <person name="Tripp M."/>
            <person name="Chang C.H."/>
            <person name="Lee J.M."/>
            <person name="Toriumi M.J."/>
            <person name="Chan M.M."/>
            <person name="Tang C.C."/>
            <person name="Onodera C.S."/>
            <person name="Deng J.M."/>
            <person name="Akiyama K."/>
            <person name="Ansari Y."/>
            <person name="Arakawa T."/>
            <person name="Banh J."/>
            <person name="Banno F."/>
            <person name="Bowser L."/>
            <person name="Brooks S.Y."/>
            <person name="Carninci P."/>
            <person name="Chao Q."/>
            <person name="Choy N."/>
            <person name="Enju A."/>
            <person name="Goldsmith A.D."/>
            <person name="Gurjal M."/>
            <person name="Hansen N.F."/>
            <person name="Hayashizaki Y."/>
            <person name="Johnson-Hopson C."/>
            <person name="Hsuan V.W."/>
            <person name="Iida K."/>
            <person name="Karnes M."/>
            <person name="Khan S."/>
            <person name="Koesema E."/>
            <person name="Ishida J."/>
            <person name="Jiang P.X."/>
            <person name="Jones T."/>
            <person name="Kawai J."/>
            <person name="Kamiya A."/>
            <person name="Meyers C."/>
            <person name="Nakajima M."/>
            <person name="Narusaka M."/>
            <person name="Seki M."/>
            <person name="Sakurai T."/>
            <person name="Satou M."/>
            <person name="Tamse R."/>
            <person name="Vaysberg M."/>
            <person name="Wallender E.K."/>
            <person name="Wong C."/>
            <person name="Yamamura Y."/>
            <person name="Yuan S."/>
            <person name="Shinozaki K."/>
            <person name="Davis R.W."/>
            <person name="Theologis A."/>
            <person name="Ecker J.R."/>
        </authorList>
    </citation>
    <scope>NUCLEOTIDE SEQUENCE [LARGE SCALE MRNA]</scope>
    <source>
        <strain>cv. Columbia</strain>
    </source>
</reference>
<reference key="4">
    <citation type="journal article" date="2009" name="DNA Res.">
        <title>Analysis of multiple occurrences of alternative splicing events in Arabidopsis thaliana using novel sequenced full-length cDNAs.</title>
        <authorList>
            <person name="Iida K."/>
            <person name="Fukami-Kobayashi K."/>
            <person name="Toyoda A."/>
            <person name="Sakaki Y."/>
            <person name="Kobayashi M."/>
            <person name="Seki M."/>
            <person name="Shinozaki K."/>
        </authorList>
    </citation>
    <scope>NUCLEOTIDE SEQUENCE [LARGE SCALE MRNA]</scope>
    <source>
        <strain>cv. Columbia</strain>
    </source>
</reference>
<reference key="5">
    <citation type="journal article" date="2002" name="Eur. J. Biochem.">
        <title>The three typical aspartic proteinase genes of Arabidopsis thaliana are differentially expressed.</title>
        <authorList>
            <person name="Chen X."/>
            <person name="Pfeil J.E."/>
            <person name="Gal S."/>
        </authorList>
    </citation>
    <scope>TISSUE SPECIFICITY</scope>
</reference>
<proteinExistence type="evidence at transcript level"/>
<accession>Q8VYL3</accession>
<accession>O04593</accession>